<name>RPOZ_BACMK</name>
<accession>A9VTA8</accession>
<dbReference type="EC" id="2.7.7.6" evidence="1"/>
<dbReference type="EMBL" id="CP000903">
    <property type="protein sequence ID" value="ABY44864.1"/>
    <property type="molecule type" value="Genomic_DNA"/>
</dbReference>
<dbReference type="RefSeq" id="WP_002014493.1">
    <property type="nucleotide sequence ID" value="NC_010184.1"/>
</dbReference>
<dbReference type="SMR" id="A9VTA8"/>
<dbReference type="KEGG" id="bwe:BcerKBAB4_3693"/>
<dbReference type="eggNOG" id="COG1758">
    <property type="taxonomic scope" value="Bacteria"/>
</dbReference>
<dbReference type="HOGENOM" id="CLU_125406_6_0_9"/>
<dbReference type="Proteomes" id="UP000002154">
    <property type="component" value="Chromosome"/>
</dbReference>
<dbReference type="GO" id="GO:0000428">
    <property type="term" value="C:DNA-directed RNA polymerase complex"/>
    <property type="evidence" value="ECO:0007669"/>
    <property type="project" value="UniProtKB-KW"/>
</dbReference>
<dbReference type="GO" id="GO:0003677">
    <property type="term" value="F:DNA binding"/>
    <property type="evidence" value="ECO:0007669"/>
    <property type="project" value="UniProtKB-UniRule"/>
</dbReference>
<dbReference type="GO" id="GO:0003899">
    <property type="term" value="F:DNA-directed RNA polymerase activity"/>
    <property type="evidence" value="ECO:0007669"/>
    <property type="project" value="UniProtKB-UniRule"/>
</dbReference>
<dbReference type="GO" id="GO:0006351">
    <property type="term" value="P:DNA-templated transcription"/>
    <property type="evidence" value="ECO:0007669"/>
    <property type="project" value="UniProtKB-UniRule"/>
</dbReference>
<dbReference type="Gene3D" id="3.90.940.10">
    <property type="match status" value="1"/>
</dbReference>
<dbReference type="HAMAP" id="MF_00366">
    <property type="entry name" value="RNApol_bact_RpoZ"/>
    <property type="match status" value="1"/>
</dbReference>
<dbReference type="InterPro" id="IPR003716">
    <property type="entry name" value="DNA-dir_RNA_pol_omega"/>
</dbReference>
<dbReference type="InterPro" id="IPR006110">
    <property type="entry name" value="Pol_omega/Rpo6/RPB6"/>
</dbReference>
<dbReference type="InterPro" id="IPR036161">
    <property type="entry name" value="RPB6/omega-like_sf"/>
</dbReference>
<dbReference type="NCBIfam" id="TIGR00690">
    <property type="entry name" value="rpoZ"/>
    <property type="match status" value="1"/>
</dbReference>
<dbReference type="PANTHER" id="PTHR34476">
    <property type="entry name" value="DNA-DIRECTED RNA POLYMERASE SUBUNIT OMEGA"/>
    <property type="match status" value="1"/>
</dbReference>
<dbReference type="PANTHER" id="PTHR34476:SF1">
    <property type="entry name" value="DNA-DIRECTED RNA POLYMERASE SUBUNIT OMEGA"/>
    <property type="match status" value="1"/>
</dbReference>
<dbReference type="Pfam" id="PF01192">
    <property type="entry name" value="RNA_pol_Rpb6"/>
    <property type="match status" value="1"/>
</dbReference>
<dbReference type="SMART" id="SM01409">
    <property type="entry name" value="RNA_pol_Rpb6"/>
    <property type="match status" value="1"/>
</dbReference>
<dbReference type="SUPFAM" id="SSF63562">
    <property type="entry name" value="RPB6/omega subunit-like"/>
    <property type="match status" value="1"/>
</dbReference>
<proteinExistence type="inferred from homology"/>
<keyword id="KW-0240">DNA-directed RNA polymerase</keyword>
<keyword id="KW-0548">Nucleotidyltransferase</keyword>
<keyword id="KW-0804">Transcription</keyword>
<keyword id="KW-0808">Transferase</keyword>
<reference key="1">
    <citation type="journal article" date="2008" name="Chem. Biol. Interact.">
        <title>Extending the Bacillus cereus group genomics to putative food-borne pathogens of different toxicity.</title>
        <authorList>
            <person name="Lapidus A."/>
            <person name="Goltsman E."/>
            <person name="Auger S."/>
            <person name="Galleron N."/>
            <person name="Segurens B."/>
            <person name="Dossat C."/>
            <person name="Land M.L."/>
            <person name="Broussolle V."/>
            <person name="Brillard J."/>
            <person name="Guinebretiere M.-H."/>
            <person name="Sanchis V."/>
            <person name="Nguen-the C."/>
            <person name="Lereclus D."/>
            <person name="Richardson P."/>
            <person name="Wincker P."/>
            <person name="Weissenbach J."/>
            <person name="Ehrlich S.D."/>
            <person name="Sorokin A."/>
        </authorList>
    </citation>
    <scope>NUCLEOTIDE SEQUENCE [LARGE SCALE GENOMIC DNA]</scope>
    <source>
        <strain>KBAB4</strain>
    </source>
</reference>
<protein>
    <recommendedName>
        <fullName evidence="1">DNA-directed RNA polymerase subunit omega</fullName>
        <shortName evidence="1">RNAP omega subunit</shortName>
        <ecNumber evidence="1">2.7.7.6</ecNumber>
    </recommendedName>
    <alternativeName>
        <fullName evidence="1">RNA polymerase omega subunit</fullName>
    </alternativeName>
    <alternativeName>
        <fullName evidence="1">Transcriptase subunit omega</fullName>
    </alternativeName>
</protein>
<feature type="chain" id="PRO_1000121190" description="DNA-directed RNA polymerase subunit omega">
    <location>
        <begin position="1"/>
        <end position="70"/>
    </location>
</feature>
<comment type="function">
    <text evidence="1">Promotes RNA polymerase assembly. Latches the N- and C-terminal regions of the beta' subunit thereby facilitating its interaction with the beta and alpha subunits.</text>
</comment>
<comment type="catalytic activity">
    <reaction evidence="1">
        <text>RNA(n) + a ribonucleoside 5'-triphosphate = RNA(n+1) + diphosphate</text>
        <dbReference type="Rhea" id="RHEA:21248"/>
        <dbReference type="Rhea" id="RHEA-COMP:14527"/>
        <dbReference type="Rhea" id="RHEA-COMP:17342"/>
        <dbReference type="ChEBI" id="CHEBI:33019"/>
        <dbReference type="ChEBI" id="CHEBI:61557"/>
        <dbReference type="ChEBI" id="CHEBI:140395"/>
        <dbReference type="EC" id="2.7.7.6"/>
    </reaction>
</comment>
<comment type="subunit">
    <text evidence="1">The RNAP catalytic core consists of 2 alpha, 1 beta, 1 beta' and 1 omega subunit. When a sigma factor is associated with the core the holoenzyme is formed, which can initiate transcription.</text>
</comment>
<comment type="similarity">
    <text evidence="1">Belongs to the RNA polymerase subunit omega family.</text>
</comment>
<evidence type="ECO:0000255" key="1">
    <source>
        <dbReference type="HAMAP-Rule" id="MF_00366"/>
    </source>
</evidence>
<gene>
    <name evidence="1" type="primary">rpoZ</name>
    <name type="ordered locus">BcerKBAB4_3693</name>
</gene>
<organism>
    <name type="scientific">Bacillus mycoides (strain KBAB4)</name>
    <name type="common">Bacillus weihenstephanensis</name>
    <dbReference type="NCBI Taxonomy" id="315730"/>
    <lineage>
        <taxon>Bacteria</taxon>
        <taxon>Bacillati</taxon>
        <taxon>Bacillota</taxon>
        <taxon>Bacilli</taxon>
        <taxon>Bacillales</taxon>
        <taxon>Bacillaceae</taxon>
        <taxon>Bacillus</taxon>
        <taxon>Bacillus cereus group</taxon>
    </lineage>
</organism>
<sequence length="70" mass="7815">MLNPSIDSLLTKIDSKYTLVTVAAKRAREMQIADNCVIEKPVSYKCVGKALEEIDLEVLKYVPSDDTIID</sequence>